<feature type="initiator methionine" description="Removed" evidence="1">
    <location>
        <position position="1"/>
    </location>
</feature>
<feature type="chain" id="PRO_0000184517" description="D-cysteine desulfhydrase">
    <location>
        <begin position="2"/>
        <end position="328"/>
    </location>
</feature>
<feature type="modified residue" description="N6-(pyridoxal phosphate)lysine" evidence="2">
    <location>
        <position position="51"/>
    </location>
</feature>
<feature type="helix" evidence="4">
    <location>
        <begin position="4"/>
        <end position="8"/>
    </location>
</feature>
<feature type="strand" evidence="4">
    <location>
        <begin position="21"/>
        <end position="23"/>
    </location>
</feature>
<feature type="helix" evidence="4">
    <location>
        <begin position="25"/>
        <end position="31"/>
    </location>
</feature>
<feature type="strand" evidence="4">
    <location>
        <begin position="35"/>
        <end position="39"/>
    </location>
</feature>
<feature type="helix" evidence="4">
    <location>
        <begin position="40"/>
        <end position="42"/>
    </location>
</feature>
<feature type="helix" evidence="4">
    <location>
        <begin position="51"/>
        <end position="64"/>
    </location>
</feature>
<feature type="strand" evidence="4">
    <location>
        <begin position="69"/>
        <end position="75"/>
    </location>
</feature>
<feature type="helix" evidence="4">
    <location>
        <begin position="79"/>
        <end position="91"/>
    </location>
</feature>
<feature type="strand" evidence="4">
    <location>
        <begin position="94"/>
        <end position="100"/>
    </location>
</feature>
<feature type="helix" evidence="4">
    <location>
        <begin position="108"/>
        <end position="112"/>
    </location>
</feature>
<feature type="helix" evidence="4">
    <location>
        <begin position="114"/>
        <end position="121"/>
    </location>
</feature>
<feature type="strand" evidence="4">
    <location>
        <begin position="125"/>
        <end position="128"/>
    </location>
</feature>
<feature type="helix" evidence="4">
    <location>
        <begin position="135"/>
        <end position="148"/>
    </location>
</feature>
<feature type="strand" evidence="4">
    <location>
        <begin position="153"/>
        <end position="155"/>
    </location>
</feature>
<feature type="helix" evidence="4">
    <location>
        <begin position="158"/>
        <end position="160"/>
    </location>
</feature>
<feature type="helix" evidence="4">
    <location>
        <begin position="163"/>
        <end position="180"/>
    </location>
</feature>
<feature type="turn" evidence="4">
    <location>
        <begin position="181"/>
        <end position="183"/>
    </location>
</feature>
<feature type="strand" evidence="4">
    <location>
        <begin position="188"/>
        <end position="196"/>
    </location>
</feature>
<feature type="helix" evidence="4">
    <location>
        <begin position="197"/>
        <end position="209"/>
    </location>
</feature>
<feature type="strand" evidence="4">
    <location>
        <begin position="213"/>
        <end position="222"/>
    </location>
</feature>
<feature type="helix" evidence="4">
    <location>
        <begin position="224"/>
        <end position="241"/>
    </location>
</feature>
<feature type="strand" evidence="4">
    <location>
        <begin position="251"/>
        <end position="253"/>
    </location>
</feature>
<feature type="strand" evidence="3">
    <location>
        <begin position="255"/>
        <end position="257"/>
    </location>
</feature>
<feature type="helix" evidence="4">
    <location>
        <begin position="266"/>
        <end position="279"/>
    </location>
</feature>
<feature type="turn" evidence="4">
    <location>
        <begin position="285"/>
        <end position="287"/>
    </location>
</feature>
<feature type="helix" evidence="4">
    <location>
        <begin position="288"/>
        <end position="301"/>
    </location>
</feature>
<feature type="strand" evidence="4">
    <location>
        <begin position="304"/>
        <end position="308"/>
    </location>
</feature>
<feature type="strand" evidence="4">
    <location>
        <begin position="310"/>
        <end position="314"/>
    </location>
</feature>
<feature type="helix" evidence="4">
    <location>
        <begin position="320"/>
        <end position="324"/>
    </location>
</feature>
<comment type="function">
    <text evidence="2">Catalyzes the alpha,beta-elimination reaction of D-cysteine and of several D-cysteine derivatives. It could be a defense mechanism against D-cysteine.</text>
</comment>
<comment type="catalytic activity">
    <reaction evidence="2">
        <text>D-cysteine + H2O = hydrogen sulfide + pyruvate + NH4(+) + H(+)</text>
        <dbReference type="Rhea" id="RHEA:11268"/>
        <dbReference type="ChEBI" id="CHEBI:15361"/>
        <dbReference type="ChEBI" id="CHEBI:15377"/>
        <dbReference type="ChEBI" id="CHEBI:15378"/>
        <dbReference type="ChEBI" id="CHEBI:28938"/>
        <dbReference type="ChEBI" id="CHEBI:29919"/>
        <dbReference type="ChEBI" id="CHEBI:35236"/>
        <dbReference type="EC" id="4.4.1.15"/>
    </reaction>
</comment>
<comment type="cofactor">
    <cofactor evidence="2">
        <name>pyridoxal 5'-phosphate</name>
        <dbReference type="ChEBI" id="CHEBI:597326"/>
    </cofactor>
</comment>
<comment type="subunit">
    <text evidence="2">Homodimer.</text>
</comment>
<comment type="similarity">
    <text evidence="2">Belongs to the ACC deaminase/D-cysteine desulfhydrase family.</text>
</comment>
<name>DCYD_SALTY</name>
<evidence type="ECO:0000250" key="1"/>
<evidence type="ECO:0000255" key="2">
    <source>
        <dbReference type="HAMAP-Rule" id="MF_01045"/>
    </source>
</evidence>
<evidence type="ECO:0007829" key="3">
    <source>
        <dbReference type="PDB" id="4D92"/>
    </source>
</evidence>
<evidence type="ECO:0007829" key="4">
    <source>
        <dbReference type="PDB" id="4D9B"/>
    </source>
</evidence>
<accession>Q8ZNT7</accession>
<organism>
    <name type="scientific">Salmonella typhimurium (strain LT2 / SGSC1412 / ATCC 700720)</name>
    <dbReference type="NCBI Taxonomy" id="99287"/>
    <lineage>
        <taxon>Bacteria</taxon>
        <taxon>Pseudomonadati</taxon>
        <taxon>Pseudomonadota</taxon>
        <taxon>Gammaproteobacteria</taxon>
        <taxon>Enterobacterales</taxon>
        <taxon>Enterobacteriaceae</taxon>
        <taxon>Salmonella</taxon>
    </lineage>
</organism>
<gene>
    <name evidence="2" type="primary">dcyD</name>
    <name type="ordered locus">STM1953</name>
</gene>
<keyword id="KW-0002">3D-structure</keyword>
<keyword id="KW-0456">Lyase</keyword>
<keyword id="KW-0663">Pyridoxal phosphate</keyword>
<keyword id="KW-1185">Reference proteome</keyword>
<sequence length="328" mass="34911">MPLHHLTRFPRLEFIGAPTPLEYLPRLSDYLGREIYIKRDDVTPIAMGGNKLRKLEFLVADALREGADTLITAGAIQSNHVRQTAAVAAKLGLHCVALLENPIGTTAENYLTNGNRLLLDLFNTQIEMCDALTDPDAQLQTLATRIEAQGFRPYVIPVGGSSALGAMGYVESALEIAQQCEEVVGLSSVVVASGSAGTHAGLAVGLEHLMPDVELIGVTVSRSVAEQKPKVIALQQAIAGQLALTATADIHLWDDYFAPGYGVPNDAGMEAVKLLASLEGVLLDPVYTGKAMAGLIDGISQKRFNDDGPILFIHTGGAPALFAYHPHV</sequence>
<protein>
    <recommendedName>
        <fullName evidence="2">D-cysteine desulfhydrase</fullName>
        <ecNumber evidence="2">4.4.1.15</ecNumber>
    </recommendedName>
</protein>
<proteinExistence type="evidence at protein level"/>
<dbReference type="EC" id="4.4.1.15" evidence="2"/>
<dbReference type="EMBL" id="AE006468">
    <property type="protein sequence ID" value="AAL20865.1"/>
    <property type="molecule type" value="Genomic_DNA"/>
</dbReference>
<dbReference type="RefSeq" id="WP_001128180.1">
    <property type="nucleotide sequence ID" value="NC_003197.2"/>
</dbReference>
<dbReference type="PDB" id="4D8T">
    <property type="method" value="X-ray"/>
    <property type="resolution" value="2.28 A"/>
    <property type="chains" value="A/B/C/D=1-328"/>
</dbReference>
<dbReference type="PDB" id="4D8U">
    <property type="method" value="X-ray"/>
    <property type="resolution" value="3.30 A"/>
    <property type="chains" value="A/B/C/D/E/F/G/H=1-328"/>
</dbReference>
<dbReference type="PDB" id="4D8W">
    <property type="method" value="X-ray"/>
    <property type="resolution" value="2.01 A"/>
    <property type="chains" value="A/B/C/D=1-328"/>
</dbReference>
<dbReference type="PDB" id="4D92">
    <property type="method" value="X-ray"/>
    <property type="resolution" value="2.22 A"/>
    <property type="chains" value="A/B/C/D=1-328"/>
</dbReference>
<dbReference type="PDB" id="4D96">
    <property type="method" value="X-ray"/>
    <property type="resolution" value="2.09 A"/>
    <property type="chains" value="A/B/C/D=1-328"/>
</dbReference>
<dbReference type="PDB" id="4D97">
    <property type="method" value="X-ray"/>
    <property type="resolution" value="1.77 A"/>
    <property type="chains" value="A/B/C/D=1-328"/>
</dbReference>
<dbReference type="PDB" id="4D99">
    <property type="method" value="X-ray"/>
    <property type="resolution" value="2.01 A"/>
    <property type="chains" value="A/B/C/D=1-328"/>
</dbReference>
<dbReference type="PDB" id="4D9B">
    <property type="method" value="X-ray"/>
    <property type="resolution" value="1.67 A"/>
    <property type="chains" value="A/B/C/D=1-328"/>
</dbReference>
<dbReference type="PDB" id="4D9C">
    <property type="method" value="X-ray"/>
    <property type="resolution" value="1.97 A"/>
    <property type="chains" value="A/B/C/D=1-328"/>
</dbReference>
<dbReference type="PDB" id="4D9E">
    <property type="method" value="X-ray"/>
    <property type="resolution" value="2.47 A"/>
    <property type="chains" value="A/B/C/D=1-328"/>
</dbReference>
<dbReference type="PDB" id="4D9F">
    <property type="method" value="X-ray"/>
    <property type="resolution" value="2.61 A"/>
    <property type="chains" value="A/B/C/D=1-328"/>
</dbReference>
<dbReference type="PDBsum" id="4D8T"/>
<dbReference type="PDBsum" id="4D8U"/>
<dbReference type="PDBsum" id="4D8W"/>
<dbReference type="PDBsum" id="4D92"/>
<dbReference type="PDBsum" id="4D96"/>
<dbReference type="PDBsum" id="4D97"/>
<dbReference type="PDBsum" id="4D99"/>
<dbReference type="PDBsum" id="4D9B"/>
<dbReference type="PDBsum" id="4D9C"/>
<dbReference type="PDBsum" id="4D9E"/>
<dbReference type="PDBsum" id="4D9F"/>
<dbReference type="SMR" id="Q8ZNT7"/>
<dbReference type="STRING" id="99287.STM1953"/>
<dbReference type="PaxDb" id="99287-STM1953"/>
<dbReference type="KEGG" id="stm:STM1953"/>
<dbReference type="PATRIC" id="fig|99287.12.peg.2068"/>
<dbReference type="HOGENOM" id="CLU_048897_1_0_6"/>
<dbReference type="OMA" id="ERYHAGT"/>
<dbReference type="PhylomeDB" id="Q8ZNT7"/>
<dbReference type="BioCyc" id="SENT99287:STM1953-MONOMER"/>
<dbReference type="BRENDA" id="4.4.1.15">
    <property type="organism ID" value="5542"/>
</dbReference>
<dbReference type="EvolutionaryTrace" id="Q8ZNT7"/>
<dbReference type="Proteomes" id="UP000001014">
    <property type="component" value="Chromosome"/>
</dbReference>
<dbReference type="GO" id="GO:0019148">
    <property type="term" value="F:D-cysteine desulfhydrase activity"/>
    <property type="evidence" value="ECO:0000318"/>
    <property type="project" value="GO_Central"/>
</dbReference>
<dbReference type="GO" id="GO:0046416">
    <property type="term" value="P:D-amino acid metabolic process"/>
    <property type="evidence" value="ECO:0007669"/>
    <property type="project" value="UniProtKB-UniRule"/>
</dbReference>
<dbReference type="CDD" id="cd06449">
    <property type="entry name" value="ACCD"/>
    <property type="match status" value="1"/>
</dbReference>
<dbReference type="FunFam" id="3.40.50.1100:FF:000019">
    <property type="entry name" value="D-cysteine desulfhydrase"/>
    <property type="match status" value="1"/>
</dbReference>
<dbReference type="Gene3D" id="3.40.50.1100">
    <property type="match status" value="2"/>
</dbReference>
<dbReference type="HAMAP" id="MF_01045">
    <property type="entry name" value="D_Cys_desulfhydr"/>
    <property type="match status" value="1"/>
</dbReference>
<dbReference type="InterPro" id="IPR027278">
    <property type="entry name" value="ACCD_DCysDesulf"/>
</dbReference>
<dbReference type="InterPro" id="IPR005966">
    <property type="entry name" value="D-Cys_desShydrase"/>
</dbReference>
<dbReference type="InterPro" id="IPR023702">
    <property type="entry name" value="D_Cys_desulphydr_bac"/>
</dbReference>
<dbReference type="InterPro" id="IPR001926">
    <property type="entry name" value="TrpB-like_PALP"/>
</dbReference>
<dbReference type="InterPro" id="IPR036052">
    <property type="entry name" value="TrpB-like_PALP_sf"/>
</dbReference>
<dbReference type="NCBIfam" id="TIGR01275">
    <property type="entry name" value="ACC_deam_rel"/>
    <property type="match status" value="1"/>
</dbReference>
<dbReference type="NCBIfam" id="NF003029">
    <property type="entry name" value="PRK03910.1-1"/>
    <property type="match status" value="1"/>
</dbReference>
<dbReference type="NCBIfam" id="NF003030">
    <property type="entry name" value="PRK03910.1-3"/>
    <property type="match status" value="1"/>
</dbReference>
<dbReference type="NCBIfam" id="NF003032">
    <property type="entry name" value="PRK03910.1-5"/>
    <property type="match status" value="1"/>
</dbReference>
<dbReference type="PANTHER" id="PTHR43780">
    <property type="entry name" value="1-AMINOCYCLOPROPANE-1-CARBOXYLATE DEAMINASE-RELATED"/>
    <property type="match status" value="1"/>
</dbReference>
<dbReference type="PANTHER" id="PTHR43780:SF2">
    <property type="entry name" value="1-AMINOCYCLOPROPANE-1-CARBOXYLATE DEAMINASE-RELATED"/>
    <property type="match status" value="1"/>
</dbReference>
<dbReference type="Pfam" id="PF00291">
    <property type="entry name" value="PALP"/>
    <property type="match status" value="1"/>
</dbReference>
<dbReference type="PIRSF" id="PIRSF006278">
    <property type="entry name" value="ACCD_DCysDesulf"/>
    <property type="match status" value="1"/>
</dbReference>
<dbReference type="SUPFAM" id="SSF53686">
    <property type="entry name" value="Tryptophan synthase beta subunit-like PLP-dependent enzymes"/>
    <property type="match status" value="1"/>
</dbReference>
<reference key="1">
    <citation type="journal article" date="2001" name="Nature">
        <title>Complete genome sequence of Salmonella enterica serovar Typhimurium LT2.</title>
        <authorList>
            <person name="McClelland M."/>
            <person name="Sanderson K.E."/>
            <person name="Spieth J."/>
            <person name="Clifton S.W."/>
            <person name="Latreille P."/>
            <person name="Courtney L."/>
            <person name="Porwollik S."/>
            <person name="Ali J."/>
            <person name="Dante M."/>
            <person name="Du F."/>
            <person name="Hou S."/>
            <person name="Layman D."/>
            <person name="Leonard S."/>
            <person name="Nguyen C."/>
            <person name="Scott K."/>
            <person name="Holmes A."/>
            <person name="Grewal N."/>
            <person name="Mulvaney E."/>
            <person name="Ryan E."/>
            <person name="Sun H."/>
            <person name="Florea L."/>
            <person name="Miller W."/>
            <person name="Stoneking T."/>
            <person name="Nhan M."/>
            <person name="Waterston R."/>
            <person name="Wilson R.K."/>
        </authorList>
    </citation>
    <scope>NUCLEOTIDE SEQUENCE [LARGE SCALE GENOMIC DNA]</scope>
    <source>
        <strain>LT2 / SGSC1412 / ATCC 700720</strain>
    </source>
</reference>